<organism>
    <name type="scientific">Xylella fastidiosa (strain 9a5c)</name>
    <dbReference type="NCBI Taxonomy" id="160492"/>
    <lineage>
        <taxon>Bacteria</taxon>
        <taxon>Pseudomonadati</taxon>
        <taxon>Pseudomonadota</taxon>
        <taxon>Gammaproteobacteria</taxon>
        <taxon>Lysobacterales</taxon>
        <taxon>Lysobacteraceae</taxon>
        <taxon>Xylella</taxon>
    </lineage>
</organism>
<gene>
    <name evidence="1" type="primary">purC</name>
    <name type="ordered locus">XF_0205</name>
</gene>
<keyword id="KW-0067">ATP-binding</keyword>
<keyword id="KW-0436">Ligase</keyword>
<keyword id="KW-0547">Nucleotide-binding</keyword>
<keyword id="KW-0658">Purine biosynthesis</keyword>
<protein>
    <recommendedName>
        <fullName evidence="1">Phosphoribosylaminoimidazole-succinocarboxamide synthase</fullName>
        <ecNumber evidence="1">6.3.2.6</ecNumber>
    </recommendedName>
    <alternativeName>
        <fullName evidence="1">SAICAR synthetase</fullName>
    </alternativeName>
</protein>
<sequence>MLTTLLQSDLPGLPLRHCGKVRDVFDIPHKRLPVDTRSGEYLLIVATDRLSAFDVVLPDPIPGKGEILCQISNFWFQKTEHLMPNHLTGINVASVLPDGIDKTLYTQRAVVTKKLKPVRIEAIARGYLIGSGWKDYQRTGKVSGIQLPDGLQEAEKLPDPIFTPSTKAAVGHHDENIDFDTTVKMVGAELAERVRDATLRIYHFAAKYAAECGILLADTKFEFGTDIDGRLYVMDEMLTPDSSRYWPIDEYQVGTSPPSYDKQFVRNYLETLDWDKTAPGPTLPQDIIDRTRAKYTKALQQLAGINID</sequence>
<name>PUR7_XYLFA</name>
<reference key="1">
    <citation type="journal article" date="2000" name="Nature">
        <title>The genome sequence of the plant pathogen Xylella fastidiosa.</title>
        <authorList>
            <person name="Simpson A.J.G."/>
            <person name="Reinach F.C."/>
            <person name="Arruda P."/>
            <person name="Abreu F.A."/>
            <person name="Acencio M."/>
            <person name="Alvarenga R."/>
            <person name="Alves L.M.C."/>
            <person name="Araya J.E."/>
            <person name="Baia G.S."/>
            <person name="Baptista C.S."/>
            <person name="Barros M.H."/>
            <person name="Bonaccorsi E.D."/>
            <person name="Bordin S."/>
            <person name="Bove J.M."/>
            <person name="Briones M.R.S."/>
            <person name="Bueno M.R.P."/>
            <person name="Camargo A.A."/>
            <person name="Camargo L.E.A."/>
            <person name="Carraro D.M."/>
            <person name="Carrer H."/>
            <person name="Colauto N.B."/>
            <person name="Colombo C."/>
            <person name="Costa F.F."/>
            <person name="Costa M.C.R."/>
            <person name="Costa-Neto C.M."/>
            <person name="Coutinho L.L."/>
            <person name="Cristofani M."/>
            <person name="Dias-Neto E."/>
            <person name="Docena C."/>
            <person name="El-Dorry H."/>
            <person name="Facincani A.P."/>
            <person name="Ferreira A.J.S."/>
            <person name="Ferreira V.C.A."/>
            <person name="Ferro J.A."/>
            <person name="Fraga J.S."/>
            <person name="Franca S.C."/>
            <person name="Franco M.C."/>
            <person name="Frohme M."/>
            <person name="Furlan L.R."/>
            <person name="Garnier M."/>
            <person name="Goldman G.H."/>
            <person name="Goldman M.H.S."/>
            <person name="Gomes S.L."/>
            <person name="Gruber A."/>
            <person name="Ho P.L."/>
            <person name="Hoheisel J.D."/>
            <person name="Junqueira M.L."/>
            <person name="Kemper E.L."/>
            <person name="Kitajima J.P."/>
            <person name="Krieger J.E."/>
            <person name="Kuramae E.E."/>
            <person name="Laigret F."/>
            <person name="Lambais M.R."/>
            <person name="Leite L.C.C."/>
            <person name="Lemos E.G.M."/>
            <person name="Lemos M.V.F."/>
            <person name="Lopes S.A."/>
            <person name="Lopes C.R."/>
            <person name="Machado J.A."/>
            <person name="Machado M.A."/>
            <person name="Madeira A.M.B.N."/>
            <person name="Madeira H.M.F."/>
            <person name="Marino C.L."/>
            <person name="Marques M.V."/>
            <person name="Martins E.A.L."/>
            <person name="Martins E.M.F."/>
            <person name="Matsukuma A.Y."/>
            <person name="Menck C.F.M."/>
            <person name="Miracca E.C."/>
            <person name="Miyaki C.Y."/>
            <person name="Monteiro-Vitorello C.B."/>
            <person name="Moon D.H."/>
            <person name="Nagai M.A."/>
            <person name="Nascimento A.L.T.O."/>
            <person name="Netto L.E.S."/>
            <person name="Nhani A. Jr."/>
            <person name="Nobrega F.G."/>
            <person name="Nunes L.R."/>
            <person name="Oliveira M.A."/>
            <person name="de Oliveira M.C."/>
            <person name="de Oliveira R.C."/>
            <person name="Palmieri D.A."/>
            <person name="Paris A."/>
            <person name="Peixoto B.R."/>
            <person name="Pereira G.A.G."/>
            <person name="Pereira H.A. Jr."/>
            <person name="Pesquero J.B."/>
            <person name="Quaggio R.B."/>
            <person name="Roberto P.G."/>
            <person name="Rodrigues V."/>
            <person name="de Rosa A.J.M."/>
            <person name="de Rosa V.E. Jr."/>
            <person name="de Sa R.G."/>
            <person name="Santelli R.V."/>
            <person name="Sawasaki H.E."/>
            <person name="da Silva A.C.R."/>
            <person name="da Silva A.M."/>
            <person name="da Silva F.R."/>
            <person name="Silva W.A. Jr."/>
            <person name="da Silveira J.F."/>
            <person name="Silvestri M.L.Z."/>
            <person name="Siqueira W.J."/>
            <person name="de Souza A.A."/>
            <person name="de Souza A.P."/>
            <person name="Terenzi M.F."/>
            <person name="Truffi D."/>
            <person name="Tsai S.M."/>
            <person name="Tsuhako M.H."/>
            <person name="Vallada H."/>
            <person name="Van Sluys M.A."/>
            <person name="Verjovski-Almeida S."/>
            <person name="Vettore A.L."/>
            <person name="Zago M.A."/>
            <person name="Zatz M."/>
            <person name="Meidanis J."/>
            <person name="Setubal J.C."/>
        </authorList>
    </citation>
    <scope>NUCLEOTIDE SEQUENCE [LARGE SCALE GENOMIC DNA]</scope>
    <source>
        <strain>9a5c</strain>
    </source>
</reference>
<accession>Q9PGU3</accession>
<comment type="catalytic activity">
    <reaction evidence="1">
        <text>5-amino-1-(5-phospho-D-ribosyl)imidazole-4-carboxylate + L-aspartate + ATP = (2S)-2-[5-amino-1-(5-phospho-beta-D-ribosyl)imidazole-4-carboxamido]succinate + ADP + phosphate + 2 H(+)</text>
        <dbReference type="Rhea" id="RHEA:22628"/>
        <dbReference type="ChEBI" id="CHEBI:15378"/>
        <dbReference type="ChEBI" id="CHEBI:29991"/>
        <dbReference type="ChEBI" id="CHEBI:30616"/>
        <dbReference type="ChEBI" id="CHEBI:43474"/>
        <dbReference type="ChEBI" id="CHEBI:58443"/>
        <dbReference type="ChEBI" id="CHEBI:77657"/>
        <dbReference type="ChEBI" id="CHEBI:456216"/>
        <dbReference type="EC" id="6.3.2.6"/>
    </reaction>
</comment>
<comment type="pathway">
    <text evidence="1">Purine metabolism; IMP biosynthesis via de novo pathway; 5-amino-1-(5-phospho-D-ribosyl)imidazole-4-carboxamide from 5-amino-1-(5-phospho-D-ribosyl)imidazole-4-carboxylate: step 1/2.</text>
</comment>
<comment type="similarity">
    <text evidence="1">Belongs to the SAICAR synthetase family.</text>
</comment>
<feature type="chain" id="PRO_0000100903" description="Phosphoribosylaminoimidazole-succinocarboxamide synthase">
    <location>
        <begin position="1"/>
        <end position="308"/>
    </location>
</feature>
<proteinExistence type="inferred from homology"/>
<evidence type="ECO:0000255" key="1">
    <source>
        <dbReference type="HAMAP-Rule" id="MF_00137"/>
    </source>
</evidence>
<dbReference type="EC" id="6.3.2.6" evidence="1"/>
<dbReference type="EMBL" id="AE003849">
    <property type="protein sequence ID" value="AAF83018.1"/>
    <property type="molecule type" value="Genomic_DNA"/>
</dbReference>
<dbReference type="PIR" id="D82834">
    <property type="entry name" value="D82834"/>
</dbReference>
<dbReference type="RefSeq" id="WP_010892746.1">
    <property type="nucleotide sequence ID" value="NC_002488.3"/>
</dbReference>
<dbReference type="SMR" id="Q9PGU3"/>
<dbReference type="STRING" id="160492.XF_0205"/>
<dbReference type="KEGG" id="xfa:XF_0205"/>
<dbReference type="PATRIC" id="fig|160492.11.peg.217"/>
<dbReference type="eggNOG" id="COG0152">
    <property type="taxonomic scope" value="Bacteria"/>
</dbReference>
<dbReference type="HOGENOM" id="CLU_045637_0_2_6"/>
<dbReference type="UniPathway" id="UPA00074">
    <property type="reaction ID" value="UER00131"/>
</dbReference>
<dbReference type="Proteomes" id="UP000000812">
    <property type="component" value="Chromosome"/>
</dbReference>
<dbReference type="GO" id="GO:0005737">
    <property type="term" value="C:cytoplasm"/>
    <property type="evidence" value="ECO:0007669"/>
    <property type="project" value="TreeGrafter"/>
</dbReference>
<dbReference type="GO" id="GO:0005524">
    <property type="term" value="F:ATP binding"/>
    <property type="evidence" value="ECO:0007669"/>
    <property type="project" value="UniProtKB-KW"/>
</dbReference>
<dbReference type="GO" id="GO:0004639">
    <property type="term" value="F:phosphoribosylaminoimidazolesuccinocarboxamide synthase activity"/>
    <property type="evidence" value="ECO:0007669"/>
    <property type="project" value="UniProtKB-UniRule"/>
</dbReference>
<dbReference type="GO" id="GO:0006189">
    <property type="term" value="P:'de novo' IMP biosynthetic process"/>
    <property type="evidence" value="ECO:0007669"/>
    <property type="project" value="UniProtKB-UniRule"/>
</dbReference>
<dbReference type="CDD" id="cd01414">
    <property type="entry name" value="SAICAR_synt_Sc"/>
    <property type="match status" value="1"/>
</dbReference>
<dbReference type="FunFam" id="3.30.200.20:FF:000365">
    <property type="entry name" value="Phosphoribosylaminoimidazole-succinocarboxamide synthase"/>
    <property type="match status" value="1"/>
</dbReference>
<dbReference type="FunFam" id="3.30.470.20:FF:000015">
    <property type="entry name" value="Phosphoribosylaminoimidazole-succinocarboxamide synthase"/>
    <property type="match status" value="1"/>
</dbReference>
<dbReference type="Gene3D" id="3.30.470.20">
    <property type="entry name" value="ATP-grasp fold, B domain"/>
    <property type="match status" value="1"/>
</dbReference>
<dbReference type="Gene3D" id="3.30.200.20">
    <property type="entry name" value="Phosphorylase Kinase, domain 1"/>
    <property type="match status" value="1"/>
</dbReference>
<dbReference type="HAMAP" id="MF_00137">
    <property type="entry name" value="SAICAR_synth"/>
    <property type="match status" value="1"/>
</dbReference>
<dbReference type="InterPro" id="IPR028923">
    <property type="entry name" value="SAICAR_synt/ADE2_N"/>
</dbReference>
<dbReference type="InterPro" id="IPR001636">
    <property type="entry name" value="SAICAR_synth"/>
</dbReference>
<dbReference type="InterPro" id="IPR018236">
    <property type="entry name" value="SAICAR_synthetase_CS"/>
</dbReference>
<dbReference type="NCBIfam" id="NF010568">
    <property type="entry name" value="PRK13961.1"/>
    <property type="match status" value="1"/>
</dbReference>
<dbReference type="NCBIfam" id="TIGR00081">
    <property type="entry name" value="purC"/>
    <property type="match status" value="1"/>
</dbReference>
<dbReference type="PANTHER" id="PTHR43700">
    <property type="entry name" value="PHOSPHORIBOSYLAMINOIMIDAZOLE-SUCCINOCARBOXAMIDE SYNTHASE"/>
    <property type="match status" value="1"/>
</dbReference>
<dbReference type="PANTHER" id="PTHR43700:SF1">
    <property type="entry name" value="PHOSPHORIBOSYLAMINOIMIDAZOLE-SUCCINOCARBOXAMIDE SYNTHASE"/>
    <property type="match status" value="1"/>
</dbReference>
<dbReference type="Pfam" id="PF01259">
    <property type="entry name" value="SAICAR_synt"/>
    <property type="match status" value="1"/>
</dbReference>
<dbReference type="SUPFAM" id="SSF56104">
    <property type="entry name" value="SAICAR synthase-like"/>
    <property type="match status" value="1"/>
</dbReference>
<dbReference type="PROSITE" id="PS01057">
    <property type="entry name" value="SAICAR_SYNTHETASE_1"/>
    <property type="match status" value="1"/>
</dbReference>
<dbReference type="PROSITE" id="PS01058">
    <property type="entry name" value="SAICAR_SYNTHETASE_2"/>
    <property type="match status" value="1"/>
</dbReference>